<keyword id="KW-1204">Blood coagulation cascade activating toxin</keyword>
<keyword id="KW-0903">Direct protein sequencing</keyword>
<keyword id="KW-0325">Glycoprotein</keyword>
<keyword id="KW-1199">Hemostasis impairing toxin</keyword>
<keyword id="KW-0378">Hydrolase</keyword>
<keyword id="KW-0645">Protease</keyword>
<keyword id="KW-0964">Secreted</keyword>
<keyword id="KW-0720">Serine protease</keyword>
<keyword id="KW-0800">Toxin</keyword>
<evidence type="ECO:0000250" key="1"/>
<evidence type="ECO:0000255" key="2">
    <source>
        <dbReference type="PROSITE-ProRule" id="PRU00274"/>
    </source>
</evidence>
<evidence type="ECO:0000269" key="3">
    <source>
    </source>
</evidence>
<dbReference type="EC" id="3.4.21.-"/>
<dbReference type="GO" id="GO:0005576">
    <property type="term" value="C:extracellular region"/>
    <property type="evidence" value="ECO:0007669"/>
    <property type="project" value="UniProtKB-SubCell"/>
</dbReference>
<dbReference type="GO" id="GO:0008236">
    <property type="term" value="F:serine-type peptidase activity"/>
    <property type="evidence" value="ECO:0007669"/>
    <property type="project" value="UniProtKB-KW"/>
</dbReference>
<dbReference type="GO" id="GO:0090729">
    <property type="term" value="F:toxin activity"/>
    <property type="evidence" value="ECO:0007669"/>
    <property type="project" value="UniProtKB-KW"/>
</dbReference>
<dbReference type="GO" id="GO:0006508">
    <property type="term" value="P:proteolysis"/>
    <property type="evidence" value="ECO:0007669"/>
    <property type="project" value="UniProtKB-KW"/>
</dbReference>
<organism>
    <name type="scientific">Bothrops jararaca</name>
    <name type="common">Jararaca</name>
    <name type="synonym">Bothrops jajaraca</name>
    <dbReference type="NCBI Taxonomy" id="8724"/>
    <lineage>
        <taxon>Eukaryota</taxon>
        <taxon>Metazoa</taxon>
        <taxon>Chordata</taxon>
        <taxon>Craniata</taxon>
        <taxon>Vertebrata</taxon>
        <taxon>Euteleostomi</taxon>
        <taxon>Lepidosauria</taxon>
        <taxon>Squamata</taxon>
        <taxon>Bifurcata</taxon>
        <taxon>Unidentata</taxon>
        <taxon>Episquamata</taxon>
        <taxon>Toxicofera</taxon>
        <taxon>Serpentes</taxon>
        <taxon>Colubroidea</taxon>
        <taxon>Viperidae</taxon>
        <taxon>Crotalinae</taxon>
        <taxon>Bothrops</taxon>
    </lineage>
</organism>
<accession>P81883</accession>
<sequence>VVGGDECNINEHRSLVAIF</sequence>
<feature type="chain" id="PRO_0000088734" description="Thrombin-like enzyme TL-BJ 2">
    <location>
        <begin position="1"/>
        <end position="19" status="greater than"/>
    </location>
</feature>
<feature type="domain" description="Peptidase S1" evidence="2">
    <location>
        <begin position="1"/>
        <end position="19" status="greater than"/>
    </location>
</feature>
<feature type="non-terminal residue">
    <location>
        <position position="19"/>
    </location>
</feature>
<proteinExistence type="evidence at protein level"/>
<name>VSPT2_BOTJA</name>
<comment type="function">
    <text evidence="3">Thrombin-like snake venom serine protease. Causes the specific clotting of fibrinogen (FGA) with release of fibrinopeptide A. The aberrant fibrinogen is then incapable of being cross-linked, forming easily dispersible clots.</text>
</comment>
<comment type="activity regulation">
    <text evidence="3">Inhibited by PMSF, but not by hirudin.</text>
</comment>
<comment type="subunit">
    <text evidence="1">Monomer.</text>
</comment>
<comment type="subcellular location">
    <subcellularLocation>
        <location>Secreted</location>
    </subcellularLocation>
</comment>
<comment type="tissue specificity">
    <text>Expressed by the venom gland.</text>
</comment>
<comment type="PTM">
    <text>N-glycosylated.</text>
</comment>
<comment type="similarity">
    <text evidence="2">Belongs to the peptidase S1 family. Snake venom subfamily.</text>
</comment>
<reference key="1">
    <citation type="journal article" date="2000" name="Thromb. Haemost.">
        <title>A novel fibrinogen-clotting enzyme, TL-BJ, from the venom of the snake Bothrops jararaca: purification and characterization.</title>
        <authorList>
            <person name="Serrano S.M.T."/>
            <person name="Sampaio C.A.M."/>
            <person name="Mentele R."/>
            <person name="Camargo A.C.M."/>
            <person name="Fink E."/>
        </authorList>
    </citation>
    <scope>PROTEIN SEQUENCE</scope>
    <scope>FUNCTION</scope>
    <scope>ACTIVITY REGULATION</scope>
    <source>
        <tissue>Venom</tissue>
    </source>
</reference>
<protein>
    <recommendedName>
        <fullName>Thrombin-like enzyme TL-BJ 2</fullName>
        <shortName>SVTLE</shortName>
        <ecNumber>3.4.21.-</ecNumber>
    </recommendedName>
    <alternativeName>
        <fullName>Fibrinogen-clotting enzyme TL-BJ isoform 2</fullName>
    </alternativeName>
    <alternativeName>
        <fullName>Snake venom serine protease</fullName>
        <shortName>SVSP</shortName>
    </alternativeName>
</protein>